<protein>
    <recommendedName>
        <fullName evidence="1">Urease accessory protein UreE</fullName>
    </recommendedName>
</protein>
<organism>
    <name type="scientific">Aliarcobacter butzleri (strain RM4018)</name>
    <name type="common">Arcobacter butzleri</name>
    <dbReference type="NCBI Taxonomy" id="367737"/>
    <lineage>
        <taxon>Bacteria</taxon>
        <taxon>Pseudomonadati</taxon>
        <taxon>Campylobacterota</taxon>
        <taxon>Epsilonproteobacteria</taxon>
        <taxon>Campylobacterales</taxon>
        <taxon>Arcobacteraceae</taxon>
        <taxon>Aliarcobacter</taxon>
    </lineage>
</organism>
<dbReference type="EMBL" id="CP000361">
    <property type="protein sequence ID" value="ABV67073.1"/>
    <property type="molecule type" value="Genomic_DNA"/>
</dbReference>
<dbReference type="RefSeq" id="WP_012012550.1">
    <property type="nucleotide sequence ID" value="NC_009850.1"/>
</dbReference>
<dbReference type="SMR" id="A8ESZ9"/>
<dbReference type="STRING" id="367737.Abu_0808"/>
<dbReference type="GeneID" id="24305290"/>
<dbReference type="KEGG" id="abu:Abu_0808"/>
<dbReference type="eggNOG" id="COG2371">
    <property type="taxonomic scope" value="Bacteria"/>
</dbReference>
<dbReference type="HOGENOM" id="CLU_093757_2_0_7"/>
<dbReference type="Proteomes" id="UP000001136">
    <property type="component" value="Chromosome"/>
</dbReference>
<dbReference type="GO" id="GO:0005737">
    <property type="term" value="C:cytoplasm"/>
    <property type="evidence" value="ECO:0007669"/>
    <property type="project" value="UniProtKB-SubCell"/>
</dbReference>
<dbReference type="GO" id="GO:0016151">
    <property type="term" value="F:nickel cation binding"/>
    <property type="evidence" value="ECO:0007669"/>
    <property type="project" value="UniProtKB-UniRule"/>
</dbReference>
<dbReference type="GO" id="GO:0051082">
    <property type="term" value="F:unfolded protein binding"/>
    <property type="evidence" value="ECO:0007669"/>
    <property type="project" value="UniProtKB-UniRule"/>
</dbReference>
<dbReference type="GO" id="GO:0006457">
    <property type="term" value="P:protein folding"/>
    <property type="evidence" value="ECO:0007669"/>
    <property type="project" value="InterPro"/>
</dbReference>
<dbReference type="GO" id="GO:0065003">
    <property type="term" value="P:protein-containing complex assembly"/>
    <property type="evidence" value="ECO:0007669"/>
    <property type="project" value="InterPro"/>
</dbReference>
<dbReference type="GO" id="GO:0019627">
    <property type="term" value="P:urea metabolic process"/>
    <property type="evidence" value="ECO:0007669"/>
    <property type="project" value="InterPro"/>
</dbReference>
<dbReference type="Gene3D" id="2.60.260.20">
    <property type="entry name" value="Urease metallochaperone UreE, N-terminal domain"/>
    <property type="match status" value="1"/>
</dbReference>
<dbReference type="Gene3D" id="3.30.70.790">
    <property type="entry name" value="UreE, C-terminal domain"/>
    <property type="match status" value="1"/>
</dbReference>
<dbReference type="HAMAP" id="MF_00822">
    <property type="entry name" value="UreE"/>
    <property type="match status" value="1"/>
</dbReference>
<dbReference type="InterPro" id="IPR012406">
    <property type="entry name" value="UreE"/>
</dbReference>
<dbReference type="InterPro" id="IPR007864">
    <property type="entry name" value="UreE_C_dom"/>
</dbReference>
<dbReference type="InterPro" id="IPR004029">
    <property type="entry name" value="UreE_N"/>
</dbReference>
<dbReference type="InterPro" id="IPR036118">
    <property type="entry name" value="UreE_N_sf"/>
</dbReference>
<dbReference type="Pfam" id="PF05194">
    <property type="entry name" value="UreE_C"/>
    <property type="match status" value="1"/>
</dbReference>
<dbReference type="PIRSF" id="PIRSF036402">
    <property type="entry name" value="Ureas_acces_UreE"/>
    <property type="match status" value="1"/>
</dbReference>
<dbReference type="SMART" id="SM00988">
    <property type="entry name" value="UreE_N"/>
    <property type="match status" value="1"/>
</dbReference>
<dbReference type="SUPFAM" id="SSF69737">
    <property type="entry name" value="Urease metallochaperone UreE, C-terminal domain"/>
    <property type="match status" value="1"/>
</dbReference>
<dbReference type="SUPFAM" id="SSF69287">
    <property type="entry name" value="Urease metallochaperone UreE, N-terminal domain"/>
    <property type="match status" value="1"/>
</dbReference>
<gene>
    <name evidence="1" type="primary">ureE</name>
    <name type="ordered locus">Abu_0808</name>
</gene>
<comment type="function">
    <text evidence="1">Involved in urease metallocenter assembly. Binds nickel. Probably functions as a nickel donor during metallocenter assembly.</text>
</comment>
<comment type="subcellular location">
    <subcellularLocation>
        <location evidence="1">Cytoplasm</location>
    </subcellularLocation>
</comment>
<comment type="similarity">
    <text evidence="1">Belongs to the UreE family.</text>
</comment>
<reference key="1">
    <citation type="journal article" date="2007" name="PLoS ONE">
        <title>The complete genome sequence and analysis of the Epsilonproteobacterium Arcobacter butzleri.</title>
        <authorList>
            <person name="Miller W.G."/>
            <person name="Parker C.T."/>
            <person name="Rubenfield M."/>
            <person name="Mendz G.L."/>
            <person name="Woesten M.M.S.M."/>
            <person name="Ussery D.W."/>
            <person name="Stolz J.F."/>
            <person name="Binnewies T.T."/>
            <person name="Hallin P.F."/>
            <person name="Wang G."/>
            <person name="Malek J.A."/>
            <person name="Rogosin A."/>
            <person name="Stanker L.H."/>
            <person name="Mandrell R.E."/>
        </authorList>
    </citation>
    <scope>NUCLEOTIDE SEQUENCE [LARGE SCALE GENOMIC DNA]</scope>
    <source>
        <strain>RM4018</strain>
    </source>
</reference>
<accession>A8ESZ9</accession>
<name>UREE_ALIB4</name>
<evidence type="ECO:0000255" key="1">
    <source>
        <dbReference type="HAMAP-Rule" id="MF_00822"/>
    </source>
</evidence>
<sequence>MTFSVIKKVIEIKKDIPFSDEVELSWFDMQKPNLTAVTKKGVNLVVKAKFTHLHENDILVCEDGIGIKVKRSEDEIFSLEFSDALTFAKTAYEIGNRHQPLQIEEFKIIVLDDISIADIIKDCYANESIKVEKTKAYFKPNGKAHHSH</sequence>
<proteinExistence type="inferred from homology"/>
<keyword id="KW-0143">Chaperone</keyword>
<keyword id="KW-0963">Cytoplasm</keyword>
<keyword id="KW-0533">Nickel</keyword>
<keyword id="KW-1185">Reference proteome</keyword>
<feature type="chain" id="PRO_1000197433" description="Urease accessory protein UreE">
    <location>
        <begin position="1"/>
        <end position="148"/>
    </location>
</feature>